<accession>A4QKK3</accession>
<comment type="function">
    <text evidence="1">Seems to be required for the assembly of the photosystem I complex.</text>
</comment>
<comment type="subcellular location">
    <subcellularLocation>
        <location evidence="1">Plastid</location>
        <location evidence="1">Chloroplast thylakoid membrane</location>
        <topology evidence="1">Multi-pass membrane protein</topology>
    </subcellularLocation>
</comment>
<comment type="similarity">
    <text evidence="1">Belongs to the Ycf4 family.</text>
</comment>
<geneLocation type="chloroplast"/>
<gene>
    <name evidence="1" type="primary">ycf4</name>
</gene>
<protein>
    <recommendedName>
        <fullName evidence="1">Photosystem I assembly protein Ycf4</fullName>
    </recommendedName>
</protein>
<proteinExistence type="inferred from homology"/>
<feature type="chain" id="PRO_0000325998" description="Photosystem I assembly protein Ycf4">
    <location>
        <begin position="1"/>
        <end position="184"/>
    </location>
</feature>
<feature type="transmembrane region" description="Helical" evidence="1">
    <location>
        <begin position="22"/>
        <end position="42"/>
    </location>
</feature>
<feature type="transmembrane region" description="Helical" evidence="1">
    <location>
        <begin position="57"/>
        <end position="77"/>
    </location>
</feature>
<organism>
    <name type="scientific">Capsella bursa-pastoris</name>
    <name type="common">Shepherd's purse</name>
    <name type="synonym">Thlaspi bursa-pastoris</name>
    <dbReference type="NCBI Taxonomy" id="3719"/>
    <lineage>
        <taxon>Eukaryota</taxon>
        <taxon>Viridiplantae</taxon>
        <taxon>Streptophyta</taxon>
        <taxon>Embryophyta</taxon>
        <taxon>Tracheophyta</taxon>
        <taxon>Spermatophyta</taxon>
        <taxon>Magnoliopsida</taxon>
        <taxon>eudicotyledons</taxon>
        <taxon>Gunneridae</taxon>
        <taxon>Pentapetalae</taxon>
        <taxon>rosids</taxon>
        <taxon>malvids</taxon>
        <taxon>Brassicales</taxon>
        <taxon>Brassicaceae</taxon>
        <taxon>Camelineae</taxon>
        <taxon>Capsella</taxon>
    </lineage>
</organism>
<sequence>MSWRSESIWIEFITGSRKTSNFCWAFILFLGSLGFLLVGTSSYLGRNVISLFPSQQIIFFPQGIVMSFYGIAGLFISCYLWCTILWNVGSGYDLFDRKEGIVRIFRWGFPGKTRRIFLRFFMKDIQSIRIEVKEGVSARRVLYMEIRGQGAIPLIRTDENFTTREIEQKAAELAYFLRVPIEVF</sequence>
<keyword id="KW-0150">Chloroplast</keyword>
<keyword id="KW-0472">Membrane</keyword>
<keyword id="KW-0602">Photosynthesis</keyword>
<keyword id="KW-0934">Plastid</keyword>
<keyword id="KW-0793">Thylakoid</keyword>
<keyword id="KW-0812">Transmembrane</keyword>
<keyword id="KW-1133">Transmembrane helix</keyword>
<evidence type="ECO:0000255" key="1">
    <source>
        <dbReference type="HAMAP-Rule" id="MF_00437"/>
    </source>
</evidence>
<name>YCF4_CAPBU</name>
<reference key="1">
    <citation type="submission" date="2007-03" db="EMBL/GenBank/DDBJ databases">
        <title>Sequencing analysis of Capsella bursa-pastoris JO22 chloroplast DNA.</title>
        <authorList>
            <person name="Hosouchi T."/>
            <person name="Tsuruoka H."/>
            <person name="Kotani H."/>
        </authorList>
    </citation>
    <scope>NUCLEOTIDE SEQUENCE [LARGE SCALE GENOMIC DNA]</scope>
</reference>
<dbReference type="EMBL" id="AP009371">
    <property type="protein sequence ID" value="BAF50208.1"/>
    <property type="molecule type" value="Genomic_DNA"/>
</dbReference>
<dbReference type="RefSeq" id="YP_001123384.1">
    <property type="nucleotide sequence ID" value="NC_009270.1"/>
</dbReference>
<dbReference type="GeneID" id="4961615"/>
<dbReference type="GO" id="GO:0009535">
    <property type="term" value="C:chloroplast thylakoid membrane"/>
    <property type="evidence" value="ECO:0007669"/>
    <property type="project" value="UniProtKB-SubCell"/>
</dbReference>
<dbReference type="GO" id="GO:0009522">
    <property type="term" value="C:photosystem I"/>
    <property type="evidence" value="ECO:0007669"/>
    <property type="project" value="InterPro"/>
</dbReference>
<dbReference type="GO" id="GO:0015979">
    <property type="term" value="P:photosynthesis"/>
    <property type="evidence" value="ECO:0007669"/>
    <property type="project" value="UniProtKB-UniRule"/>
</dbReference>
<dbReference type="HAMAP" id="MF_00437">
    <property type="entry name" value="Ycf4"/>
    <property type="match status" value="1"/>
</dbReference>
<dbReference type="InterPro" id="IPR003359">
    <property type="entry name" value="PSI_Ycf4_assembly"/>
</dbReference>
<dbReference type="PANTHER" id="PTHR33288">
    <property type="match status" value="1"/>
</dbReference>
<dbReference type="PANTHER" id="PTHR33288:SF4">
    <property type="entry name" value="PHOTOSYSTEM I ASSEMBLY PROTEIN YCF4"/>
    <property type="match status" value="1"/>
</dbReference>
<dbReference type="Pfam" id="PF02392">
    <property type="entry name" value="Ycf4"/>
    <property type="match status" value="1"/>
</dbReference>